<dbReference type="EMBL" id="BT020770">
    <property type="protein sequence ID" value="AAX08787.1"/>
    <property type="molecule type" value="mRNA"/>
</dbReference>
<dbReference type="RefSeq" id="NP_001019665.1">
    <property type="nucleotide sequence ID" value="NM_001024494.1"/>
</dbReference>
<dbReference type="SMR" id="Q5E9Z9"/>
<dbReference type="FunCoup" id="Q5E9Z9">
    <property type="interactions" value="168"/>
</dbReference>
<dbReference type="STRING" id="9913.ENSBTAP00000023767"/>
<dbReference type="GlyCosmos" id="Q5E9Z9">
    <property type="glycosylation" value="1 site, No reported glycans"/>
</dbReference>
<dbReference type="GlyGen" id="Q5E9Z9">
    <property type="glycosylation" value="1 site"/>
</dbReference>
<dbReference type="PaxDb" id="9913-ENSBTAP00000023767"/>
<dbReference type="GeneID" id="507718"/>
<dbReference type="KEGG" id="bta:507718"/>
<dbReference type="CTD" id="81607"/>
<dbReference type="eggNOG" id="ENOG502R9I0">
    <property type="taxonomic scope" value="Eukaryota"/>
</dbReference>
<dbReference type="InParanoid" id="Q5E9Z9"/>
<dbReference type="OrthoDB" id="8872282at2759"/>
<dbReference type="Proteomes" id="UP000009136">
    <property type="component" value="Unplaced"/>
</dbReference>
<dbReference type="GO" id="GO:0005912">
    <property type="term" value="C:adherens junction"/>
    <property type="evidence" value="ECO:0000318"/>
    <property type="project" value="GO_Central"/>
</dbReference>
<dbReference type="GO" id="GO:0005886">
    <property type="term" value="C:plasma membrane"/>
    <property type="evidence" value="ECO:0007669"/>
    <property type="project" value="UniProtKB-SubCell"/>
</dbReference>
<dbReference type="GO" id="GO:0007157">
    <property type="term" value="P:heterophilic cell-cell adhesion via plasma membrane cell adhesion molecules"/>
    <property type="evidence" value="ECO:0000318"/>
    <property type="project" value="GO_Central"/>
</dbReference>
<dbReference type="GO" id="GO:0007156">
    <property type="term" value="P:homophilic cell adhesion via plasma membrane adhesion molecules"/>
    <property type="evidence" value="ECO:0000318"/>
    <property type="project" value="GO_Central"/>
</dbReference>
<dbReference type="GO" id="GO:0046718">
    <property type="term" value="P:symbiont entry into host cell"/>
    <property type="evidence" value="ECO:0007669"/>
    <property type="project" value="InterPro"/>
</dbReference>
<dbReference type="CDD" id="cd00096">
    <property type="entry name" value="Ig"/>
    <property type="match status" value="1"/>
</dbReference>
<dbReference type="CDD" id="cd07704">
    <property type="entry name" value="IgC1_2_Nectin-3-4_like"/>
    <property type="match status" value="1"/>
</dbReference>
<dbReference type="FunFam" id="2.60.40.10:FF:000560">
    <property type="entry name" value="Nectin cell adhesion molecule 4"/>
    <property type="match status" value="1"/>
</dbReference>
<dbReference type="FunFam" id="2.60.40.10:FF:000627">
    <property type="entry name" value="Nectin cell adhesion molecule 4"/>
    <property type="match status" value="1"/>
</dbReference>
<dbReference type="FunFam" id="2.60.40.10:FF:001007">
    <property type="entry name" value="nectin-4 isoform X2"/>
    <property type="match status" value="1"/>
</dbReference>
<dbReference type="Gene3D" id="2.60.40.10">
    <property type="entry name" value="Immunoglobulins"/>
    <property type="match status" value="3"/>
</dbReference>
<dbReference type="InterPro" id="IPR013162">
    <property type="entry name" value="CD80_C2-set"/>
</dbReference>
<dbReference type="InterPro" id="IPR007110">
    <property type="entry name" value="Ig-like_dom"/>
</dbReference>
<dbReference type="InterPro" id="IPR036179">
    <property type="entry name" value="Ig-like_dom_sf"/>
</dbReference>
<dbReference type="InterPro" id="IPR013783">
    <property type="entry name" value="Ig-like_fold"/>
</dbReference>
<dbReference type="InterPro" id="IPR003599">
    <property type="entry name" value="Ig_sub"/>
</dbReference>
<dbReference type="InterPro" id="IPR003598">
    <property type="entry name" value="Ig_sub2"/>
</dbReference>
<dbReference type="InterPro" id="IPR013106">
    <property type="entry name" value="Ig_V-set"/>
</dbReference>
<dbReference type="InterPro" id="IPR033320">
    <property type="entry name" value="IgC1_2_Nectin-3-4-like"/>
</dbReference>
<dbReference type="InterPro" id="IPR051427">
    <property type="entry name" value="Nectin/Nectin-like"/>
</dbReference>
<dbReference type="PANTHER" id="PTHR23277:SF11">
    <property type="entry name" value="NECTIN-4"/>
    <property type="match status" value="1"/>
</dbReference>
<dbReference type="PANTHER" id="PTHR23277">
    <property type="entry name" value="NECTIN-RELATED"/>
    <property type="match status" value="1"/>
</dbReference>
<dbReference type="Pfam" id="PF08205">
    <property type="entry name" value="C2-set_2"/>
    <property type="match status" value="1"/>
</dbReference>
<dbReference type="Pfam" id="PF13927">
    <property type="entry name" value="Ig_3"/>
    <property type="match status" value="1"/>
</dbReference>
<dbReference type="Pfam" id="PF07686">
    <property type="entry name" value="V-set"/>
    <property type="match status" value="1"/>
</dbReference>
<dbReference type="SMART" id="SM00409">
    <property type="entry name" value="IG"/>
    <property type="match status" value="2"/>
</dbReference>
<dbReference type="SMART" id="SM00408">
    <property type="entry name" value="IGc2"/>
    <property type="match status" value="2"/>
</dbReference>
<dbReference type="SUPFAM" id="SSF48726">
    <property type="entry name" value="Immunoglobulin"/>
    <property type="match status" value="2"/>
</dbReference>
<dbReference type="PROSITE" id="PS50835">
    <property type="entry name" value="IG_LIKE"/>
    <property type="match status" value="3"/>
</dbReference>
<proteinExistence type="evidence at transcript level"/>
<organism>
    <name type="scientific">Bos taurus</name>
    <name type="common">Bovine</name>
    <dbReference type="NCBI Taxonomy" id="9913"/>
    <lineage>
        <taxon>Eukaryota</taxon>
        <taxon>Metazoa</taxon>
        <taxon>Chordata</taxon>
        <taxon>Craniata</taxon>
        <taxon>Vertebrata</taxon>
        <taxon>Euteleostomi</taxon>
        <taxon>Mammalia</taxon>
        <taxon>Eutheria</taxon>
        <taxon>Laurasiatheria</taxon>
        <taxon>Artiodactyla</taxon>
        <taxon>Ruminantia</taxon>
        <taxon>Pecora</taxon>
        <taxon>Bovidae</taxon>
        <taxon>Bovinae</taxon>
        <taxon>Bos</taxon>
    </lineage>
</organism>
<gene>
    <name evidence="1" type="primary">NECTIN4</name>
    <name type="synonym">PVRL4</name>
</gene>
<comment type="function">
    <text evidence="1">Seems to be involved in cell adhesion through trans-homophilic and -heterophilic interactions, the latter including specifically interactions with NECTIN1. Plays a role in the senescence-associated cell size enlargement via SFK/PI3K/Rac1 and thus promotes senescent cell survival. Also participates in the innate immune response by acting as a ligand for the receptor TIGIT to inhibit NK-cell activity.</text>
</comment>
<comment type="subunit">
    <text evidence="1">Self-associates. Interacts via its Ig-like V-type domain with NECTIN1 Ig-like V-type domain. Interacts via its C-terminus with AFDN. Interacts with TIGIT.</text>
</comment>
<comment type="subcellular location">
    <subcellularLocation>
        <location evidence="1">Cell membrane</location>
        <topology evidence="1">Single-pass type I membrane protein</topology>
    </subcellularLocation>
    <subcellularLocation>
        <location evidence="1">Cell junction</location>
        <location evidence="1">Adherens junction</location>
    </subcellularLocation>
    <text evidence="1">Colocalizes with AFDN at cadherin-based adherens junctions.</text>
</comment>
<comment type="similarity">
    <text evidence="5">Belongs to the nectin family.</text>
</comment>
<protein>
    <recommendedName>
        <fullName>Nectin-4</fullName>
    </recommendedName>
    <alternativeName>
        <fullName evidence="1">Nectin cell adhesion molecule 4</fullName>
    </alternativeName>
    <alternativeName>
        <fullName>Poliovirus receptor-related protein 4</fullName>
    </alternativeName>
</protein>
<accession>Q5E9Z9</accession>
<keyword id="KW-0130">Cell adhesion</keyword>
<keyword id="KW-0965">Cell junction</keyword>
<keyword id="KW-1003">Cell membrane</keyword>
<keyword id="KW-1015">Disulfide bond</keyword>
<keyword id="KW-0325">Glycoprotein</keyword>
<keyword id="KW-0393">Immunoglobulin domain</keyword>
<keyword id="KW-0472">Membrane</keyword>
<keyword id="KW-1185">Reference proteome</keyword>
<keyword id="KW-0677">Repeat</keyword>
<keyword id="KW-0732">Signal</keyword>
<keyword id="KW-0812">Transmembrane</keyword>
<keyword id="KW-1133">Transmembrane helix</keyword>
<name>NECT4_BOVIN</name>
<sequence>MPLSLGAEMWGPAAWLLLLLLLASFTGQRLAGELETSDLVTVVLGQDAKLPCFYRGDPGEQVEHVAWARVDAGEGGRELALLNSKYGLHVSSAYEGRVEQPPPPRNPLDGAVLLRNAVHADEGEYECRVSTFPAGSFQARLRLRVLVPPLPSLNPGPPLEEGQGLTLAASCTAEGSPAPSVTWDTEVKGTASHRSFTHSRSAAVTSEFHLVPSRSMNGQPLTCVVSHPGLLQDQRITHILQVAFLAEASVRGLEDRKLWQVGREGAMLKCLSEGQPPPSYNWTRLDGPLPSGVRAEGDTLGFPTLTPEHSGTYVCRVSNALSSRDSQVVVDVLDPEDAPGKQVDLVSASVVVVGVIAALLFCLLVVVVVLMSRYHRRKAQQMTQKYEEELTLTRENSIRRLHSHHSDPRNQPEESVGLRAEGHPDSLKDNSSCSVMSEEPEGRSYSTLTTVREIETQTELPSPGPGRAEEEEDRDEGIKQAMNHFVQENGTLRAKPTGNGIYINGRGHLV</sequence>
<feature type="signal peptide" evidence="2">
    <location>
        <begin position="1"/>
        <end position="31"/>
    </location>
</feature>
<feature type="chain" id="PRO_0000297672" description="Nectin-4">
    <location>
        <begin position="32"/>
        <end position="510"/>
    </location>
</feature>
<feature type="topological domain" description="Extracellular" evidence="2">
    <location>
        <begin position="32"/>
        <end position="349"/>
    </location>
</feature>
<feature type="transmembrane region" description="Helical" evidence="2">
    <location>
        <begin position="350"/>
        <end position="370"/>
    </location>
</feature>
<feature type="topological domain" description="Cytoplasmic" evidence="2">
    <location>
        <begin position="371"/>
        <end position="510"/>
    </location>
</feature>
<feature type="domain" description="Ig-like V-type">
    <location>
        <begin position="32"/>
        <end position="144"/>
    </location>
</feature>
<feature type="domain" description="Ig-like C2-type 1">
    <location>
        <begin position="148"/>
        <end position="237"/>
    </location>
</feature>
<feature type="domain" description="Ig-like C2-type 2">
    <location>
        <begin position="248"/>
        <end position="331"/>
    </location>
</feature>
<feature type="region of interest" description="Disordered" evidence="4">
    <location>
        <begin position="400"/>
        <end position="475"/>
    </location>
</feature>
<feature type="compositionally biased region" description="Basic and acidic residues" evidence="4">
    <location>
        <begin position="400"/>
        <end position="412"/>
    </location>
</feature>
<feature type="glycosylation site" description="N-linked (GlcNAc...) asparagine" evidence="2">
    <location>
        <position position="281"/>
    </location>
</feature>
<feature type="disulfide bond" evidence="3">
    <location>
        <begin position="52"/>
        <end position="127"/>
    </location>
</feature>
<feature type="disulfide bond" evidence="3">
    <location>
        <begin position="171"/>
        <end position="223"/>
    </location>
</feature>
<feature type="disulfide bond" evidence="3">
    <location>
        <begin position="270"/>
        <end position="315"/>
    </location>
</feature>
<reference key="1">
    <citation type="journal article" date="2005" name="BMC Genomics">
        <title>Characterization of 954 bovine full-CDS cDNA sequences.</title>
        <authorList>
            <person name="Harhay G.P."/>
            <person name="Sonstegard T.S."/>
            <person name="Keele J.W."/>
            <person name="Heaton M.P."/>
            <person name="Clawson M.L."/>
            <person name="Snelling W.M."/>
            <person name="Wiedmann R.T."/>
            <person name="Van Tassell C.P."/>
            <person name="Smith T.P.L."/>
        </authorList>
    </citation>
    <scope>NUCLEOTIDE SEQUENCE [LARGE SCALE MRNA]</scope>
</reference>
<evidence type="ECO:0000250" key="1">
    <source>
        <dbReference type="UniProtKB" id="Q96NY8"/>
    </source>
</evidence>
<evidence type="ECO:0000255" key="2"/>
<evidence type="ECO:0000255" key="3">
    <source>
        <dbReference type="PROSITE-ProRule" id="PRU00114"/>
    </source>
</evidence>
<evidence type="ECO:0000256" key="4">
    <source>
        <dbReference type="SAM" id="MobiDB-lite"/>
    </source>
</evidence>
<evidence type="ECO:0000305" key="5"/>